<organism>
    <name type="scientific">Baumannia cicadellinicola subsp. Homalodisca coagulata</name>
    <dbReference type="NCBI Taxonomy" id="374463"/>
    <lineage>
        <taxon>Bacteria</taxon>
        <taxon>Pseudomonadati</taxon>
        <taxon>Pseudomonadota</taxon>
        <taxon>Gammaproteobacteria</taxon>
        <taxon>Candidatus Palibaumannia</taxon>
    </lineage>
</organism>
<reference key="1">
    <citation type="journal article" date="2006" name="PLoS Biol.">
        <title>Metabolic complementarity and genomics of the dual bacterial symbiosis of sharpshooters.</title>
        <authorList>
            <person name="Wu D."/>
            <person name="Daugherty S.C."/>
            <person name="Van Aken S.E."/>
            <person name="Pai G.H."/>
            <person name="Watkins K.L."/>
            <person name="Khouri H."/>
            <person name="Tallon L.J."/>
            <person name="Zaborsky J.M."/>
            <person name="Dunbar H.E."/>
            <person name="Tran P.L."/>
            <person name="Moran N.A."/>
            <person name="Eisen J.A."/>
        </authorList>
    </citation>
    <scope>NUCLEOTIDE SEQUENCE [LARGE SCALE GENOMIC DNA]</scope>
</reference>
<protein>
    <recommendedName>
        <fullName evidence="1">ATP synthase subunit c</fullName>
    </recommendedName>
    <alternativeName>
        <fullName evidence="1">ATP synthase F(0) sector subunit c</fullName>
    </alternativeName>
    <alternativeName>
        <fullName evidence="1">F-type ATPase subunit c</fullName>
        <shortName evidence="1">F-ATPase subunit c</shortName>
    </alternativeName>
    <alternativeName>
        <fullName evidence="1">Lipid-binding protein</fullName>
    </alternativeName>
</protein>
<keyword id="KW-0066">ATP synthesis</keyword>
<keyword id="KW-1003">Cell membrane</keyword>
<keyword id="KW-0138">CF(0)</keyword>
<keyword id="KW-0375">Hydrogen ion transport</keyword>
<keyword id="KW-0406">Ion transport</keyword>
<keyword id="KW-0446">Lipid-binding</keyword>
<keyword id="KW-0472">Membrane</keyword>
<keyword id="KW-1185">Reference proteome</keyword>
<keyword id="KW-0812">Transmembrane</keyword>
<keyword id="KW-1133">Transmembrane helix</keyword>
<keyword id="KW-0813">Transport</keyword>
<comment type="function">
    <text evidence="1">F(1)F(0) ATP synthase produces ATP from ADP in the presence of a proton or sodium gradient. F-type ATPases consist of two structural domains, F(1) containing the extramembraneous catalytic core and F(0) containing the membrane proton channel, linked together by a central stalk and a peripheral stalk. During catalysis, ATP synthesis in the catalytic domain of F(1) is coupled via a rotary mechanism of the central stalk subunits to proton translocation.</text>
</comment>
<comment type="function">
    <text evidence="1">Key component of the F(0) channel; it plays a direct role in translocation across the membrane. A homomeric c-ring of between 10-14 subunits forms the central stalk rotor element with the F(1) delta and epsilon subunits.</text>
</comment>
<comment type="subunit">
    <text evidence="1">F-type ATPases have 2 components, F(1) - the catalytic core - and F(0) - the membrane proton channel. F(1) has five subunits: alpha(3), beta(3), gamma(1), delta(1), epsilon(1). F(0) has three main subunits: a(1), b(2) and c(10-14). The alpha and beta chains form an alternating ring which encloses part of the gamma chain. F(1) is attached to F(0) by a central stalk formed by the gamma and epsilon chains, while a peripheral stalk is formed by the delta and b chains.</text>
</comment>
<comment type="subcellular location">
    <subcellularLocation>
        <location evidence="1">Cell membrane</location>
        <topology evidence="1">Multi-pass membrane protein</topology>
    </subcellularLocation>
</comment>
<comment type="similarity">
    <text evidence="1">Belongs to the ATPase C chain family.</text>
</comment>
<proteinExistence type="inferred from homology"/>
<evidence type="ECO:0000255" key="1">
    <source>
        <dbReference type="HAMAP-Rule" id="MF_01396"/>
    </source>
</evidence>
<accession>Q1LTU9</accession>
<dbReference type="EMBL" id="CP000238">
    <property type="protein sequence ID" value="ABF14115.1"/>
    <property type="molecule type" value="Genomic_DNA"/>
</dbReference>
<dbReference type="RefSeq" id="WP_011520348.1">
    <property type="nucleotide sequence ID" value="NC_007984.1"/>
</dbReference>
<dbReference type="SMR" id="Q1LTU9"/>
<dbReference type="STRING" id="374463.BCI_0146"/>
<dbReference type="KEGG" id="bci:BCI_0146"/>
<dbReference type="HOGENOM" id="CLU_148047_1_0_6"/>
<dbReference type="OrthoDB" id="9811659at2"/>
<dbReference type="Proteomes" id="UP000002427">
    <property type="component" value="Chromosome"/>
</dbReference>
<dbReference type="GO" id="GO:0005886">
    <property type="term" value="C:plasma membrane"/>
    <property type="evidence" value="ECO:0007669"/>
    <property type="project" value="UniProtKB-SubCell"/>
</dbReference>
<dbReference type="GO" id="GO:0045259">
    <property type="term" value="C:proton-transporting ATP synthase complex"/>
    <property type="evidence" value="ECO:0007669"/>
    <property type="project" value="UniProtKB-KW"/>
</dbReference>
<dbReference type="GO" id="GO:0033177">
    <property type="term" value="C:proton-transporting two-sector ATPase complex, proton-transporting domain"/>
    <property type="evidence" value="ECO:0007669"/>
    <property type="project" value="InterPro"/>
</dbReference>
<dbReference type="GO" id="GO:0008289">
    <property type="term" value="F:lipid binding"/>
    <property type="evidence" value="ECO:0007669"/>
    <property type="project" value="UniProtKB-KW"/>
</dbReference>
<dbReference type="GO" id="GO:0046933">
    <property type="term" value="F:proton-transporting ATP synthase activity, rotational mechanism"/>
    <property type="evidence" value="ECO:0007669"/>
    <property type="project" value="UniProtKB-UniRule"/>
</dbReference>
<dbReference type="CDD" id="cd18185">
    <property type="entry name" value="ATP-synt_Fo_c_ATPE"/>
    <property type="match status" value="1"/>
</dbReference>
<dbReference type="FunFam" id="1.20.20.10:FF:000002">
    <property type="entry name" value="ATP synthase subunit c"/>
    <property type="match status" value="1"/>
</dbReference>
<dbReference type="Gene3D" id="1.20.20.10">
    <property type="entry name" value="F1F0 ATP synthase subunit C"/>
    <property type="match status" value="1"/>
</dbReference>
<dbReference type="HAMAP" id="MF_01396">
    <property type="entry name" value="ATP_synth_c_bact"/>
    <property type="match status" value="1"/>
</dbReference>
<dbReference type="InterPro" id="IPR005953">
    <property type="entry name" value="ATP_synth_csu_bac/chlpt"/>
</dbReference>
<dbReference type="InterPro" id="IPR000454">
    <property type="entry name" value="ATP_synth_F0_csu"/>
</dbReference>
<dbReference type="InterPro" id="IPR020537">
    <property type="entry name" value="ATP_synth_F0_csu_DDCD_BS"/>
</dbReference>
<dbReference type="InterPro" id="IPR038662">
    <property type="entry name" value="ATP_synth_F0_csu_sf"/>
</dbReference>
<dbReference type="InterPro" id="IPR002379">
    <property type="entry name" value="ATPase_proteolipid_c-like_dom"/>
</dbReference>
<dbReference type="InterPro" id="IPR035921">
    <property type="entry name" value="F/V-ATP_Csub_sf"/>
</dbReference>
<dbReference type="NCBIfam" id="TIGR01260">
    <property type="entry name" value="ATP_synt_c"/>
    <property type="match status" value="1"/>
</dbReference>
<dbReference type="NCBIfam" id="NF005363">
    <property type="entry name" value="PRK06876.1"/>
    <property type="match status" value="1"/>
</dbReference>
<dbReference type="Pfam" id="PF00137">
    <property type="entry name" value="ATP-synt_C"/>
    <property type="match status" value="1"/>
</dbReference>
<dbReference type="PRINTS" id="PR00124">
    <property type="entry name" value="ATPASEC"/>
</dbReference>
<dbReference type="SUPFAM" id="SSF81333">
    <property type="entry name" value="F1F0 ATP synthase subunit C"/>
    <property type="match status" value="1"/>
</dbReference>
<dbReference type="PROSITE" id="PS00605">
    <property type="entry name" value="ATPASE_C"/>
    <property type="match status" value="1"/>
</dbReference>
<sequence>MNSLNINLLYIAATIMMGLAAIGAAIGIGILGGKFLEGAARQPDLIPLLRSQFFIVMGLVDAIPMITVGLGLYILFAVAS</sequence>
<name>ATPL_BAUCH</name>
<feature type="chain" id="PRO_1000184335" description="ATP synthase subunit c">
    <location>
        <begin position="1"/>
        <end position="80"/>
    </location>
</feature>
<feature type="transmembrane region" description="Helical" evidence="1">
    <location>
        <begin position="11"/>
        <end position="31"/>
    </location>
</feature>
<feature type="transmembrane region" description="Helical" evidence="1">
    <location>
        <begin position="54"/>
        <end position="74"/>
    </location>
</feature>
<feature type="site" description="Reversibly protonated during proton transport" evidence="1">
    <location>
        <position position="61"/>
    </location>
</feature>
<gene>
    <name evidence="1" type="primary">atpE</name>
    <name type="ordered locus">BCI_0146</name>
</gene>